<proteinExistence type="inferred from homology"/>
<sequence>MFKFALALTLCLAGSLSLAQHNPHWWGNRNTIVHLFEWKWSDIAEECESFLGPRGFAGVQVSPVNENIISAGRPWWERYQPISYKLTTRSGNEEEFGDMVRRCNEVGVRIYVDVLLNHMSGDFDGVAIGTAGTEAEPSKKSFPGVPFSAQDFPPSCEITDWNNRFQVQQCELVGLKDLDQSSDWVRSKLIEFLDHLIELGVAGFRVDAAKHMASEDLEYIYRSLSDLNTDHGFPHNARPFIFQEVIDHGHETVSRDEYKDLGAVTEFRFSEEIGNAFRGNNALRWLQSWGTGWGFLPSGQALTFVDNHDNQRDAGAVLNYKSPRQYKMATAFHLAYPYGISRVMSSFAFDDHDTPPPQDAQERIISPEFDEDGACVNGWICEHRWRQIYAMVGFKNAVRDTEMAEWWDNGDSQISFCRGNKGFLAVNNNQYDLSQELNTCLPAGEYCDVISGSLINGSCTGKSVTVKDNGYGYIHIGVDDFDGMMALHVDAKV</sequence>
<comment type="catalytic activity">
    <reaction evidence="2">
        <text>Endohydrolysis of (1-&gt;4)-alpha-D-glucosidic linkages in polysaccharides containing three or more (1-&gt;4)-alpha-linked D-glucose units.</text>
        <dbReference type="EC" id="3.2.1.1"/>
    </reaction>
</comment>
<comment type="cofactor">
    <cofactor evidence="3">
        <name>Ca(2+)</name>
        <dbReference type="ChEBI" id="CHEBI:29108"/>
    </cofactor>
    <text evidence="3">Binds 1 Ca(2+) ion per subunit.</text>
</comment>
<comment type="cofactor">
    <cofactor evidence="3">
        <name>chloride</name>
        <dbReference type="ChEBI" id="CHEBI:17996"/>
    </cofactor>
    <text evidence="3">Binds 1 Cl(-) ion per subunit.</text>
</comment>
<comment type="subunit">
    <text evidence="1">Monomer.</text>
</comment>
<comment type="subcellular location">
    <subcellularLocation>
        <location evidence="5">Secreted</location>
    </subcellularLocation>
</comment>
<comment type="similarity">
    <text evidence="5">Belongs to the glycosyl hydrolase 13 family.</text>
</comment>
<accession>Q9NJP0</accession>
<feature type="signal peptide" evidence="1">
    <location>
        <begin position="1"/>
        <end position="19"/>
    </location>
</feature>
<feature type="chain" id="PRO_0000001376" description="Alpha-amylase-related protein">
    <location>
        <begin position="20"/>
        <end position="493"/>
    </location>
</feature>
<feature type="active site" description="Nucleophile" evidence="2">
    <location>
        <position position="207"/>
    </location>
</feature>
<feature type="active site" description="Proton donor" evidence="2">
    <location>
        <position position="244"/>
    </location>
</feature>
<feature type="binding site" evidence="3">
    <location>
        <position position="117"/>
    </location>
    <ligand>
        <name>Ca(2+)</name>
        <dbReference type="ChEBI" id="CHEBI:29108"/>
    </ligand>
</feature>
<feature type="binding site" evidence="3">
    <location>
        <position position="168"/>
    </location>
    <ligand>
        <name>Ca(2+)</name>
        <dbReference type="ChEBI" id="CHEBI:29108"/>
    </ligand>
</feature>
<feature type="binding site" evidence="3">
    <location>
        <position position="177"/>
    </location>
    <ligand>
        <name>Ca(2+)</name>
        <dbReference type="ChEBI" id="CHEBI:29108"/>
    </ligand>
</feature>
<feature type="binding site" evidence="3">
    <location>
        <position position="205"/>
    </location>
    <ligand>
        <name>chloride</name>
        <dbReference type="ChEBI" id="CHEBI:17996"/>
    </ligand>
</feature>
<feature type="binding site" evidence="3">
    <location>
        <position position="211"/>
    </location>
    <ligand>
        <name>Ca(2+)</name>
        <dbReference type="ChEBI" id="CHEBI:29108"/>
    </ligand>
</feature>
<feature type="binding site" evidence="3">
    <location>
        <position position="307"/>
    </location>
    <ligand>
        <name>chloride</name>
        <dbReference type="ChEBI" id="CHEBI:17996"/>
    </ligand>
</feature>
<feature type="binding site" evidence="3">
    <location>
        <position position="342"/>
    </location>
    <ligand>
        <name>chloride</name>
        <dbReference type="ChEBI" id="CHEBI:17996"/>
    </ligand>
</feature>
<feature type="site" description="Transition state stabilizer" evidence="2">
    <location>
        <position position="309"/>
    </location>
</feature>
<feature type="modified residue" description="Pyrrolidone carboxylic acid" evidence="1">
    <location>
        <position position="20"/>
    </location>
</feature>
<feature type="disulfide bond" evidence="3">
    <location>
        <begin position="47"/>
        <end position="103"/>
    </location>
</feature>
<feature type="disulfide bond" evidence="3">
    <location>
        <begin position="156"/>
        <end position="170"/>
    </location>
</feature>
<feature type="disulfide bond" evidence="3">
    <location>
        <begin position="375"/>
        <end position="381"/>
    </location>
</feature>
<feature type="disulfide bond" evidence="4">
    <location>
        <begin position="417"/>
        <end position="440"/>
    </location>
</feature>
<feature type="disulfide bond" evidence="3">
    <location>
        <begin position="447"/>
        <end position="459"/>
    </location>
</feature>
<name>AMYR_DROEL</name>
<dbReference type="EC" id="3.2.1.1" evidence="2"/>
<dbReference type="EMBL" id="AF136930">
    <property type="protein sequence ID" value="AAF25712.2"/>
    <property type="molecule type" value="Genomic_DNA"/>
</dbReference>
<dbReference type="SMR" id="Q9NJP0"/>
<dbReference type="CAZy" id="GH13">
    <property type="family name" value="Glycoside Hydrolase Family 13"/>
</dbReference>
<dbReference type="GO" id="GO:0005576">
    <property type="term" value="C:extracellular region"/>
    <property type="evidence" value="ECO:0007669"/>
    <property type="project" value="UniProtKB-SubCell"/>
</dbReference>
<dbReference type="GO" id="GO:0004556">
    <property type="term" value="F:alpha-amylase activity"/>
    <property type="evidence" value="ECO:0007669"/>
    <property type="project" value="UniProtKB-EC"/>
</dbReference>
<dbReference type="GO" id="GO:0046872">
    <property type="term" value="F:metal ion binding"/>
    <property type="evidence" value="ECO:0007669"/>
    <property type="project" value="UniProtKB-KW"/>
</dbReference>
<dbReference type="GO" id="GO:0005975">
    <property type="term" value="P:carbohydrate metabolic process"/>
    <property type="evidence" value="ECO:0007669"/>
    <property type="project" value="InterPro"/>
</dbReference>
<dbReference type="CDD" id="cd11317">
    <property type="entry name" value="AmyAc_bac_euk_AmyA"/>
    <property type="match status" value="1"/>
</dbReference>
<dbReference type="FunFam" id="3.20.20.80:FF:000119">
    <property type="entry name" value="Alpha-amylase-related protein"/>
    <property type="match status" value="1"/>
</dbReference>
<dbReference type="FunFam" id="2.60.40.1180:FF:000020">
    <property type="entry name" value="Pancreatic alpha-amylase"/>
    <property type="match status" value="1"/>
</dbReference>
<dbReference type="Gene3D" id="3.20.20.80">
    <property type="entry name" value="Glycosidases"/>
    <property type="match status" value="1"/>
</dbReference>
<dbReference type="Gene3D" id="2.60.40.1180">
    <property type="entry name" value="Golgi alpha-mannosidase II"/>
    <property type="match status" value="1"/>
</dbReference>
<dbReference type="InterPro" id="IPR006048">
    <property type="entry name" value="A-amylase/branching_C"/>
</dbReference>
<dbReference type="InterPro" id="IPR031319">
    <property type="entry name" value="A-amylase_C"/>
</dbReference>
<dbReference type="InterPro" id="IPR006046">
    <property type="entry name" value="Alpha_amylase"/>
</dbReference>
<dbReference type="InterPro" id="IPR006047">
    <property type="entry name" value="Glyco_hydro_13_cat_dom"/>
</dbReference>
<dbReference type="InterPro" id="IPR013780">
    <property type="entry name" value="Glyco_hydro_b"/>
</dbReference>
<dbReference type="InterPro" id="IPR017853">
    <property type="entry name" value="Glycoside_hydrolase_SF"/>
</dbReference>
<dbReference type="PANTHER" id="PTHR43447">
    <property type="entry name" value="ALPHA-AMYLASE"/>
    <property type="match status" value="1"/>
</dbReference>
<dbReference type="Pfam" id="PF00128">
    <property type="entry name" value="Alpha-amylase"/>
    <property type="match status" value="1"/>
</dbReference>
<dbReference type="Pfam" id="PF02806">
    <property type="entry name" value="Alpha-amylase_C"/>
    <property type="match status" value="1"/>
</dbReference>
<dbReference type="PRINTS" id="PR00110">
    <property type="entry name" value="ALPHAAMYLASE"/>
</dbReference>
<dbReference type="SMART" id="SM00642">
    <property type="entry name" value="Aamy"/>
    <property type="match status" value="1"/>
</dbReference>
<dbReference type="SMART" id="SM00632">
    <property type="entry name" value="Aamy_C"/>
    <property type="match status" value="1"/>
</dbReference>
<dbReference type="SUPFAM" id="SSF51445">
    <property type="entry name" value="(Trans)glycosidases"/>
    <property type="match status" value="1"/>
</dbReference>
<dbReference type="SUPFAM" id="SSF51011">
    <property type="entry name" value="Glycosyl hydrolase domain"/>
    <property type="match status" value="1"/>
</dbReference>
<keyword id="KW-0106">Calcium</keyword>
<keyword id="KW-0119">Carbohydrate metabolism</keyword>
<keyword id="KW-0868">Chloride</keyword>
<keyword id="KW-1015">Disulfide bond</keyword>
<keyword id="KW-0326">Glycosidase</keyword>
<keyword id="KW-0378">Hydrolase</keyword>
<keyword id="KW-0479">Metal-binding</keyword>
<keyword id="KW-0873">Pyrrolidone carboxylic acid</keyword>
<keyword id="KW-0964">Secreted</keyword>
<keyword id="KW-0732">Signal</keyword>
<reference key="1">
    <citation type="submission" date="2002-10" db="EMBL/GenBank/DDBJ databases">
        <title>Origin and evolution of the Amyrel gene in Drosophila.</title>
        <authorList>
            <person name="Da Lage J.-L."/>
            <person name="Renard E."/>
            <person name="Chartois F."/>
            <person name="Cariou M.-L."/>
        </authorList>
    </citation>
    <scope>NUCLEOTIDE SEQUENCE [GENOMIC DNA]</scope>
</reference>
<organism>
    <name type="scientific">Drosophila elegans</name>
    <name type="common">Fruit fly</name>
    <dbReference type="NCBI Taxonomy" id="30023"/>
    <lineage>
        <taxon>Eukaryota</taxon>
        <taxon>Metazoa</taxon>
        <taxon>Ecdysozoa</taxon>
        <taxon>Arthropoda</taxon>
        <taxon>Hexapoda</taxon>
        <taxon>Insecta</taxon>
        <taxon>Pterygota</taxon>
        <taxon>Neoptera</taxon>
        <taxon>Endopterygota</taxon>
        <taxon>Diptera</taxon>
        <taxon>Brachycera</taxon>
        <taxon>Muscomorpha</taxon>
        <taxon>Ephydroidea</taxon>
        <taxon>Drosophilidae</taxon>
        <taxon>Drosophila</taxon>
        <taxon>Sophophora</taxon>
    </lineage>
</organism>
<gene>
    <name type="primary">Amyrel</name>
</gene>
<protein>
    <recommendedName>
        <fullName>Alpha-amylase-related protein</fullName>
        <ecNumber evidence="2">3.2.1.1</ecNumber>
    </recommendedName>
</protein>
<evidence type="ECO:0000250" key="1"/>
<evidence type="ECO:0000250" key="2">
    <source>
        <dbReference type="UniProtKB" id="P04746"/>
    </source>
</evidence>
<evidence type="ECO:0000250" key="3">
    <source>
        <dbReference type="UniProtKB" id="P56634"/>
    </source>
</evidence>
<evidence type="ECO:0000255" key="4"/>
<evidence type="ECO:0000305" key="5"/>